<protein>
    <recommendedName>
        <fullName>Aspartyl/glutamyl-tRNA(Asn/Gln) amidotransferase subunit B</fullName>
        <shortName>Asp/Glu-ADT subunit B</shortName>
        <ecNumber>6.3.5.-</ecNumber>
    </recommendedName>
</protein>
<reference key="1">
    <citation type="journal article" date="1995" name="Science">
        <title>The minimal gene complement of Mycoplasma genitalium.</title>
        <authorList>
            <person name="Fraser C.M."/>
            <person name="Gocayne J.D."/>
            <person name="White O."/>
            <person name="Adams M.D."/>
            <person name="Clayton R.A."/>
            <person name="Fleischmann R.D."/>
            <person name="Bult C.J."/>
            <person name="Kerlavage A.R."/>
            <person name="Sutton G.G."/>
            <person name="Kelley J.M."/>
            <person name="Fritchman J.L."/>
            <person name="Weidman J.F."/>
            <person name="Small K.V."/>
            <person name="Sandusky M."/>
            <person name="Fuhrmann J.L."/>
            <person name="Nguyen D.T."/>
            <person name="Utterback T.R."/>
            <person name="Saudek D.M."/>
            <person name="Phillips C.A."/>
            <person name="Merrick J.M."/>
            <person name="Tomb J.-F."/>
            <person name="Dougherty B.A."/>
            <person name="Bott K.F."/>
            <person name="Hu P.-C."/>
            <person name="Lucier T.S."/>
            <person name="Peterson S.N."/>
            <person name="Smith H.O."/>
            <person name="Hutchison C.A. III"/>
            <person name="Venter J.C."/>
        </authorList>
    </citation>
    <scope>NUCLEOTIDE SEQUENCE [LARGE SCALE GENOMIC DNA]</scope>
    <source>
        <strain>ATCC 33530 / DSM 19775 / NCTC 10195 / G37</strain>
    </source>
</reference>
<reference key="2">
    <citation type="journal article" date="1993" name="J. Bacteriol.">
        <title>A survey of the Mycoplasma genitalium genome by using random sequencing.</title>
        <authorList>
            <person name="Peterson S.N."/>
            <person name="Hu P.-C."/>
            <person name="Bott K.F."/>
            <person name="Hutchison C.A. III"/>
        </authorList>
    </citation>
    <scope>NUCLEOTIDE SEQUENCE [GENOMIC DNA] OF 80-177</scope>
    <source>
        <strain>ATCC 33530 / DSM 19775 / NCTC 10195 / G37</strain>
    </source>
</reference>
<dbReference type="EC" id="6.3.5.-"/>
<dbReference type="EMBL" id="L43967">
    <property type="protein sequence ID" value="AAC71318.1"/>
    <property type="molecule type" value="Genomic_DNA"/>
</dbReference>
<dbReference type="EMBL" id="U01799">
    <property type="protein sequence ID" value="AAD12325.1"/>
    <property type="molecule type" value="Genomic_DNA"/>
</dbReference>
<dbReference type="PIR" id="A64211">
    <property type="entry name" value="A64211"/>
</dbReference>
<dbReference type="RefSeq" id="WP_009885658.1">
    <property type="nucleotide sequence ID" value="NC_000908.2"/>
</dbReference>
<dbReference type="SMR" id="P47346"/>
<dbReference type="FunCoup" id="P47346">
    <property type="interactions" value="199"/>
</dbReference>
<dbReference type="STRING" id="243273.MG_100"/>
<dbReference type="GeneID" id="88282223"/>
<dbReference type="KEGG" id="mge:MG_100"/>
<dbReference type="eggNOG" id="COG0064">
    <property type="taxonomic scope" value="Bacteria"/>
</dbReference>
<dbReference type="HOGENOM" id="CLU_019240_0_0_14"/>
<dbReference type="InParanoid" id="P47346"/>
<dbReference type="OrthoDB" id="9804078at2"/>
<dbReference type="BioCyc" id="MGEN243273:G1GJ2-112-MONOMER"/>
<dbReference type="Proteomes" id="UP000000807">
    <property type="component" value="Chromosome"/>
</dbReference>
<dbReference type="GO" id="GO:0050566">
    <property type="term" value="F:asparaginyl-tRNA synthase (glutamine-hydrolyzing) activity"/>
    <property type="evidence" value="ECO:0007669"/>
    <property type="project" value="RHEA"/>
</dbReference>
<dbReference type="GO" id="GO:0005524">
    <property type="term" value="F:ATP binding"/>
    <property type="evidence" value="ECO:0007669"/>
    <property type="project" value="UniProtKB-KW"/>
</dbReference>
<dbReference type="GO" id="GO:0050567">
    <property type="term" value="F:glutaminyl-tRNA synthase (glutamine-hydrolyzing) activity"/>
    <property type="evidence" value="ECO:0000318"/>
    <property type="project" value="GO_Central"/>
</dbReference>
<dbReference type="GO" id="GO:0070681">
    <property type="term" value="P:glutaminyl-tRNAGln biosynthesis via transamidation"/>
    <property type="evidence" value="ECO:0000318"/>
    <property type="project" value="GO_Central"/>
</dbReference>
<dbReference type="GO" id="GO:0006412">
    <property type="term" value="P:translation"/>
    <property type="evidence" value="ECO:0007669"/>
    <property type="project" value="UniProtKB-UniRule"/>
</dbReference>
<dbReference type="Gene3D" id="1.10.10.410">
    <property type="match status" value="1"/>
</dbReference>
<dbReference type="HAMAP" id="MF_00121">
    <property type="entry name" value="GatB"/>
    <property type="match status" value="1"/>
</dbReference>
<dbReference type="InterPro" id="IPR017959">
    <property type="entry name" value="Asn/Gln-tRNA_amidoTrfase_suB/E"/>
</dbReference>
<dbReference type="InterPro" id="IPR006075">
    <property type="entry name" value="Asn/Gln-tRNA_Trfase_suB/E_cat"/>
</dbReference>
<dbReference type="InterPro" id="IPR018027">
    <property type="entry name" value="Asn/Gln_amidotransferase"/>
</dbReference>
<dbReference type="InterPro" id="IPR003789">
    <property type="entry name" value="Asn/Gln_tRNA_amidoTrase-B-like"/>
</dbReference>
<dbReference type="InterPro" id="IPR004413">
    <property type="entry name" value="GatB"/>
</dbReference>
<dbReference type="InterPro" id="IPR023168">
    <property type="entry name" value="GatB_Yqey_C_2"/>
</dbReference>
<dbReference type="InterPro" id="IPR017958">
    <property type="entry name" value="Gln-tRNA_amidoTrfase_suB_CS"/>
</dbReference>
<dbReference type="InterPro" id="IPR014746">
    <property type="entry name" value="Gln_synth/guanido_kin_cat_dom"/>
</dbReference>
<dbReference type="NCBIfam" id="TIGR00133">
    <property type="entry name" value="gatB"/>
    <property type="match status" value="1"/>
</dbReference>
<dbReference type="NCBIfam" id="NF004012">
    <property type="entry name" value="PRK05477.1-2"/>
    <property type="match status" value="1"/>
</dbReference>
<dbReference type="PANTHER" id="PTHR11659">
    <property type="entry name" value="GLUTAMYL-TRNA GLN AMIDOTRANSFERASE SUBUNIT B MITOCHONDRIAL AND PROKARYOTIC PET112-RELATED"/>
    <property type="match status" value="1"/>
</dbReference>
<dbReference type="PANTHER" id="PTHR11659:SF0">
    <property type="entry name" value="GLUTAMYL-TRNA(GLN) AMIDOTRANSFERASE SUBUNIT B, MITOCHONDRIAL"/>
    <property type="match status" value="1"/>
</dbReference>
<dbReference type="Pfam" id="PF02934">
    <property type="entry name" value="GatB_N"/>
    <property type="match status" value="1"/>
</dbReference>
<dbReference type="Pfam" id="PF02637">
    <property type="entry name" value="GatB_Yqey"/>
    <property type="match status" value="1"/>
</dbReference>
<dbReference type="SMART" id="SM00845">
    <property type="entry name" value="GatB_Yqey"/>
    <property type="match status" value="1"/>
</dbReference>
<dbReference type="SUPFAM" id="SSF89095">
    <property type="entry name" value="GatB/YqeY motif"/>
    <property type="match status" value="1"/>
</dbReference>
<dbReference type="SUPFAM" id="SSF55931">
    <property type="entry name" value="Glutamine synthetase/guanido kinase"/>
    <property type="match status" value="1"/>
</dbReference>
<dbReference type="PROSITE" id="PS01234">
    <property type="entry name" value="GATB"/>
    <property type="match status" value="1"/>
</dbReference>
<keyword id="KW-0067">ATP-binding</keyword>
<keyword id="KW-0436">Ligase</keyword>
<keyword id="KW-0547">Nucleotide-binding</keyword>
<keyword id="KW-0648">Protein biosynthesis</keyword>
<keyword id="KW-1185">Reference proteome</keyword>
<evidence type="ECO:0000250" key="1"/>
<evidence type="ECO:0000305" key="2"/>
<sequence length="477" mass="54695">MINFEAIIGIEVHVVLNTASKMFSKAPNRVDNQKINHFIDPIDLGLPGTLPQVNELAVYKALLLADALKMKTVTNKLVFDRKHYFYQDLPKGFQITQQNYPFAKNGVVTINVDAIEKPIYIDRFHLEEDTAKQHFNHDQILLDFNRCGAPLIEVVTLPVINTAKEAKAYLQKLRQILIVNNISNAKLEDGSMRSDCNVSVRLKGQRQLGTKIEIKNINSLNNVEKAIDLEINRQVKALINGETLSQATLSFDDKTNNNVFMRKKDNTIDYRYFIEPNIMTSNIDDLLLEKPVAFQLEQFQKELIDSNVNPQLVQLVVDDATIFSAFQTINSVIKNPQETIRWLCIELIGQLNKTNSSLTANLIQDLITLIEMLKAAKVNQKQAKQLITLMIETKKDPKSLAKLHNLEQITDPKELQKIIKKIFQENEKEILKNIDRIERIQKLIIGQVMHKTNNRANPQQVFIIVENMLHEVRERDS</sequence>
<organism>
    <name type="scientific">Mycoplasma genitalium (strain ATCC 33530 / DSM 19775 / NCTC 10195 / G37)</name>
    <name type="common">Mycoplasmoides genitalium</name>
    <dbReference type="NCBI Taxonomy" id="243273"/>
    <lineage>
        <taxon>Bacteria</taxon>
        <taxon>Bacillati</taxon>
        <taxon>Mycoplasmatota</taxon>
        <taxon>Mycoplasmoidales</taxon>
        <taxon>Mycoplasmoidaceae</taxon>
        <taxon>Mycoplasmoides</taxon>
    </lineage>
</organism>
<comment type="function">
    <text evidence="1">Allows the formation of correctly charged Asn-tRNA(Asn) or Gln-tRNA(Gln) through the transamidation of misacylated Asp-tRNA(Asn) or Glu-tRNA(Gln) in organisms which lack either or both of asparaginyl-tRNA or glutaminyl-tRNA synthetases. The reaction takes place in the presence of glutamine and ATP through an activated phospho-Asp-tRNA(Asn) or phospho-Glu-tRNA(Gln) (By similarity).</text>
</comment>
<comment type="catalytic activity">
    <reaction>
        <text>L-glutamyl-tRNA(Gln) + L-glutamine + ATP + H2O = L-glutaminyl-tRNA(Gln) + L-glutamate + ADP + phosphate + H(+)</text>
        <dbReference type="Rhea" id="RHEA:17521"/>
        <dbReference type="Rhea" id="RHEA-COMP:9681"/>
        <dbReference type="Rhea" id="RHEA-COMP:9684"/>
        <dbReference type="ChEBI" id="CHEBI:15377"/>
        <dbReference type="ChEBI" id="CHEBI:15378"/>
        <dbReference type="ChEBI" id="CHEBI:29985"/>
        <dbReference type="ChEBI" id="CHEBI:30616"/>
        <dbReference type="ChEBI" id="CHEBI:43474"/>
        <dbReference type="ChEBI" id="CHEBI:58359"/>
        <dbReference type="ChEBI" id="CHEBI:78520"/>
        <dbReference type="ChEBI" id="CHEBI:78521"/>
        <dbReference type="ChEBI" id="CHEBI:456216"/>
    </reaction>
</comment>
<comment type="catalytic activity">
    <reaction>
        <text>L-aspartyl-tRNA(Asn) + L-glutamine + ATP + H2O = L-asparaginyl-tRNA(Asn) + L-glutamate + ADP + phosphate + 2 H(+)</text>
        <dbReference type="Rhea" id="RHEA:14513"/>
        <dbReference type="Rhea" id="RHEA-COMP:9674"/>
        <dbReference type="Rhea" id="RHEA-COMP:9677"/>
        <dbReference type="ChEBI" id="CHEBI:15377"/>
        <dbReference type="ChEBI" id="CHEBI:15378"/>
        <dbReference type="ChEBI" id="CHEBI:29985"/>
        <dbReference type="ChEBI" id="CHEBI:30616"/>
        <dbReference type="ChEBI" id="CHEBI:43474"/>
        <dbReference type="ChEBI" id="CHEBI:58359"/>
        <dbReference type="ChEBI" id="CHEBI:78515"/>
        <dbReference type="ChEBI" id="CHEBI:78516"/>
        <dbReference type="ChEBI" id="CHEBI:456216"/>
    </reaction>
</comment>
<comment type="subunit">
    <text evidence="1">Heterotrimer of A, B and C subunits.</text>
</comment>
<comment type="similarity">
    <text evidence="2">Belongs to the GatB/GatE family. GatB subfamily.</text>
</comment>
<proteinExistence type="inferred from homology"/>
<accession>P47346</accession>
<gene>
    <name type="primary">gatB</name>
    <name type="ordered locus">MG100</name>
</gene>
<feature type="chain" id="PRO_0000148807" description="Aspartyl/glutamyl-tRNA(Asn/Gln) amidotransferase subunit B">
    <location>
        <begin position="1"/>
        <end position="477"/>
    </location>
</feature>
<name>GATB_MYCGE</name>